<dbReference type="EC" id="1.17.7.4" evidence="1"/>
<dbReference type="EMBL" id="AE015924">
    <property type="protein sequence ID" value="AAQ65788.1"/>
    <property type="molecule type" value="Genomic_DNA"/>
</dbReference>
<dbReference type="RefSeq" id="WP_005874511.1">
    <property type="nucleotide sequence ID" value="NC_002950.2"/>
</dbReference>
<dbReference type="SMR" id="Q7MWK6"/>
<dbReference type="STRING" id="242619.PG_0604"/>
<dbReference type="DNASU" id="2552442"/>
<dbReference type="EnsemblBacteria" id="AAQ65788">
    <property type="protein sequence ID" value="AAQ65788"/>
    <property type="gene ID" value="PG_0604"/>
</dbReference>
<dbReference type="KEGG" id="pgi:PG_0604"/>
<dbReference type="eggNOG" id="COG0761">
    <property type="taxonomic scope" value="Bacteria"/>
</dbReference>
<dbReference type="HOGENOM" id="CLU_027486_0_1_10"/>
<dbReference type="UniPathway" id="UPA00056">
    <property type="reaction ID" value="UER00097"/>
</dbReference>
<dbReference type="UniPathway" id="UPA00059">
    <property type="reaction ID" value="UER00105"/>
</dbReference>
<dbReference type="Proteomes" id="UP000000588">
    <property type="component" value="Chromosome"/>
</dbReference>
<dbReference type="GO" id="GO:0051539">
    <property type="term" value="F:4 iron, 4 sulfur cluster binding"/>
    <property type="evidence" value="ECO:0007669"/>
    <property type="project" value="UniProtKB-UniRule"/>
</dbReference>
<dbReference type="GO" id="GO:0051745">
    <property type="term" value="F:4-hydroxy-3-methylbut-2-enyl diphosphate reductase activity"/>
    <property type="evidence" value="ECO:0007669"/>
    <property type="project" value="UniProtKB-UniRule"/>
</dbReference>
<dbReference type="GO" id="GO:0046872">
    <property type="term" value="F:metal ion binding"/>
    <property type="evidence" value="ECO:0007669"/>
    <property type="project" value="UniProtKB-KW"/>
</dbReference>
<dbReference type="GO" id="GO:0050992">
    <property type="term" value="P:dimethylallyl diphosphate biosynthetic process"/>
    <property type="evidence" value="ECO:0007669"/>
    <property type="project" value="UniProtKB-UniRule"/>
</dbReference>
<dbReference type="GO" id="GO:0019288">
    <property type="term" value="P:isopentenyl diphosphate biosynthetic process, methylerythritol 4-phosphate pathway"/>
    <property type="evidence" value="ECO:0007669"/>
    <property type="project" value="UniProtKB-UniRule"/>
</dbReference>
<dbReference type="GO" id="GO:0016114">
    <property type="term" value="P:terpenoid biosynthetic process"/>
    <property type="evidence" value="ECO:0007669"/>
    <property type="project" value="UniProtKB-UniRule"/>
</dbReference>
<dbReference type="CDD" id="cd13944">
    <property type="entry name" value="lytB_ispH"/>
    <property type="match status" value="1"/>
</dbReference>
<dbReference type="Gene3D" id="3.40.50.11270">
    <property type="match status" value="1"/>
</dbReference>
<dbReference type="Gene3D" id="3.40.1010.20">
    <property type="entry name" value="4-hydroxy-3-methylbut-2-enyl diphosphate reductase, catalytic domain"/>
    <property type="match status" value="2"/>
</dbReference>
<dbReference type="HAMAP" id="MF_00191">
    <property type="entry name" value="IspH"/>
    <property type="match status" value="1"/>
</dbReference>
<dbReference type="InterPro" id="IPR003451">
    <property type="entry name" value="LytB/IspH"/>
</dbReference>
<dbReference type="NCBIfam" id="TIGR00216">
    <property type="entry name" value="ispH_lytB"/>
    <property type="match status" value="1"/>
</dbReference>
<dbReference type="NCBIfam" id="NF002187">
    <property type="entry name" value="PRK01045.1-1"/>
    <property type="match status" value="1"/>
</dbReference>
<dbReference type="PANTHER" id="PTHR30426">
    <property type="entry name" value="4-HYDROXY-3-METHYLBUT-2-ENYL DIPHOSPHATE REDUCTASE"/>
    <property type="match status" value="1"/>
</dbReference>
<dbReference type="PANTHER" id="PTHR30426:SF0">
    <property type="entry name" value="4-HYDROXY-3-METHYLBUT-2-ENYL DIPHOSPHATE REDUCTASE"/>
    <property type="match status" value="1"/>
</dbReference>
<dbReference type="Pfam" id="PF02401">
    <property type="entry name" value="LYTB"/>
    <property type="match status" value="1"/>
</dbReference>
<keyword id="KW-0004">4Fe-4S</keyword>
<keyword id="KW-0408">Iron</keyword>
<keyword id="KW-0411">Iron-sulfur</keyword>
<keyword id="KW-0414">Isoprene biosynthesis</keyword>
<keyword id="KW-0479">Metal-binding</keyword>
<keyword id="KW-0560">Oxidoreductase</keyword>
<keyword id="KW-1185">Reference proteome</keyword>
<accession>Q7MWK6</accession>
<feature type="chain" id="PRO_0000128852" description="4-hydroxy-3-methylbut-2-enyl diphosphate reductase">
    <location>
        <begin position="1"/>
        <end position="289"/>
    </location>
</feature>
<feature type="active site" description="Proton donor" evidence="1">
    <location>
        <position position="132"/>
    </location>
</feature>
<feature type="binding site" evidence="1">
    <location>
        <position position="13"/>
    </location>
    <ligand>
        <name>[4Fe-4S] cluster</name>
        <dbReference type="ChEBI" id="CHEBI:49883"/>
    </ligand>
</feature>
<feature type="binding site" evidence="1">
    <location>
        <position position="42"/>
    </location>
    <ligand>
        <name>(2E)-4-hydroxy-3-methylbut-2-enyl diphosphate</name>
        <dbReference type="ChEBI" id="CHEBI:128753"/>
    </ligand>
</feature>
<feature type="binding site" evidence="1">
    <location>
        <position position="42"/>
    </location>
    <ligand>
        <name>dimethylallyl diphosphate</name>
        <dbReference type="ChEBI" id="CHEBI:57623"/>
    </ligand>
</feature>
<feature type="binding site" evidence="1">
    <location>
        <position position="42"/>
    </location>
    <ligand>
        <name>isopentenyl diphosphate</name>
        <dbReference type="ChEBI" id="CHEBI:128769"/>
    </ligand>
</feature>
<feature type="binding site" evidence="1">
    <location>
        <position position="76"/>
    </location>
    <ligand>
        <name>(2E)-4-hydroxy-3-methylbut-2-enyl diphosphate</name>
        <dbReference type="ChEBI" id="CHEBI:128753"/>
    </ligand>
</feature>
<feature type="binding site" evidence="1">
    <location>
        <position position="76"/>
    </location>
    <ligand>
        <name>dimethylallyl diphosphate</name>
        <dbReference type="ChEBI" id="CHEBI:57623"/>
    </ligand>
</feature>
<feature type="binding site" evidence="1">
    <location>
        <position position="76"/>
    </location>
    <ligand>
        <name>isopentenyl diphosphate</name>
        <dbReference type="ChEBI" id="CHEBI:128769"/>
    </ligand>
</feature>
<feature type="binding site" evidence="1">
    <location>
        <position position="98"/>
    </location>
    <ligand>
        <name>[4Fe-4S] cluster</name>
        <dbReference type="ChEBI" id="CHEBI:49883"/>
    </ligand>
</feature>
<feature type="binding site" evidence="1">
    <location>
        <position position="130"/>
    </location>
    <ligand>
        <name>(2E)-4-hydroxy-3-methylbut-2-enyl diphosphate</name>
        <dbReference type="ChEBI" id="CHEBI:128753"/>
    </ligand>
</feature>
<feature type="binding site" evidence="1">
    <location>
        <position position="130"/>
    </location>
    <ligand>
        <name>dimethylallyl diphosphate</name>
        <dbReference type="ChEBI" id="CHEBI:57623"/>
    </ligand>
</feature>
<feature type="binding site" evidence="1">
    <location>
        <position position="130"/>
    </location>
    <ligand>
        <name>isopentenyl diphosphate</name>
        <dbReference type="ChEBI" id="CHEBI:128769"/>
    </ligand>
</feature>
<feature type="binding site" evidence="1">
    <location>
        <position position="168"/>
    </location>
    <ligand>
        <name>(2E)-4-hydroxy-3-methylbut-2-enyl diphosphate</name>
        <dbReference type="ChEBI" id="CHEBI:128753"/>
    </ligand>
</feature>
<feature type="binding site" evidence="1">
    <location>
        <position position="199"/>
    </location>
    <ligand>
        <name>[4Fe-4S] cluster</name>
        <dbReference type="ChEBI" id="CHEBI:49883"/>
    </ligand>
</feature>
<feature type="binding site" evidence="1">
    <location>
        <position position="227"/>
    </location>
    <ligand>
        <name>(2E)-4-hydroxy-3-methylbut-2-enyl diphosphate</name>
        <dbReference type="ChEBI" id="CHEBI:128753"/>
    </ligand>
</feature>
<feature type="binding site" evidence="1">
    <location>
        <position position="227"/>
    </location>
    <ligand>
        <name>dimethylallyl diphosphate</name>
        <dbReference type="ChEBI" id="CHEBI:57623"/>
    </ligand>
</feature>
<feature type="binding site" evidence="1">
    <location>
        <position position="227"/>
    </location>
    <ligand>
        <name>isopentenyl diphosphate</name>
        <dbReference type="ChEBI" id="CHEBI:128769"/>
    </ligand>
</feature>
<feature type="binding site" evidence="1">
    <location>
        <position position="228"/>
    </location>
    <ligand>
        <name>(2E)-4-hydroxy-3-methylbut-2-enyl diphosphate</name>
        <dbReference type="ChEBI" id="CHEBI:128753"/>
    </ligand>
</feature>
<feature type="binding site" evidence="1">
    <location>
        <position position="228"/>
    </location>
    <ligand>
        <name>dimethylallyl diphosphate</name>
        <dbReference type="ChEBI" id="CHEBI:57623"/>
    </ligand>
</feature>
<feature type="binding site" evidence="1">
    <location>
        <position position="228"/>
    </location>
    <ligand>
        <name>isopentenyl diphosphate</name>
        <dbReference type="ChEBI" id="CHEBI:128769"/>
    </ligand>
</feature>
<feature type="binding site" evidence="1">
    <location>
        <position position="229"/>
    </location>
    <ligand>
        <name>(2E)-4-hydroxy-3-methylbut-2-enyl diphosphate</name>
        <dbReference type="ChEBI" id="CHEBI:128753"/>
    </ligand>
</feature>
<feature type="binding site" evidence="1">
    <location>
        <position position="229"/>
    </location>
    <ligand>
        <name>dimethylallyl diphosphate</name>
        <dbReference type="ChEBI" id="CHEBI:57623"/>
    </ligand>
</feature>
<feature type="binding site" evidence="1">
    <location>
        <position position="229"/>
    </location>
    <ligand>
        <name>isopentenyl diphosphate</name>
        <dbReference type="ChEBI" id="CHEBI:128769"/>
    </ligand>
</feature>
<feature type="binding site" evidence="1">
    <location>
        <position position="272"/>
    </location>
    <ligand>
        <name>(2E)-4-hydroxy-3-methylbut-2-enyl diphosphate</name>
        <dbReference type="ChEBI" id="CHEBI:128753"/>
    </ligand>
</feature>
<feature type="binding site" evidence="1">
    <location>
        <position position="272"/>
    </location>
    <ligand>
        <name>dimethylallyl diphosphate</name>
        <dbReference type="ChEBI" id="CHEBI:57623"/>
    </ligand>
</feature>
<feature type="binding site" evidence="1">
    <location>
        <position position="272"/>
    </location>
    <ligand>
        <name>isopentenyl diphosphate</name>
        <dbReference type="ChEBI" id="CHEBI:128769"/>
    </ligand>
</feature>
<gene>
    <name evidence="1" type="primary">ispH</name>
    <name type="ordered locus">PG_0604</name>
</gene>
<organism>
    <name type="scientific">Porphyromonas gingivalis (strain ATCC BAA-308 / W83)</name>
    <dbReference type="NCBI Taxonomy" id="242619"/>
    <lineage>
        <taxon>Bacteria</taxon>
        <taxon>Pseudomonadati</taxon>
        <taxon>Bacteroidota</taxon>
        <taxon>Bacteroidia</taxon>
        <taxon>Bacteroidales</taxon>
        <taxon>Porphyromonadaceae</taxon>
        <taxon>Porphyromonas</taxon>
    </lineage>
</organism>
<evidence type="ECO:0000255" key="1">
    <source>
        <dbReference type="HAMAP-Rule" id="MF_00191"/>
    </source>
</evidence>
<comment type="function">
    <text evidence="1">Catalyzes the conversion of 1-hydroxy-2-methyl-2-(E)-butenyl 4-diphosphate (HMBPP) into a mixture of isopentenyl diphosphate (IPP) and dimethylallyl diphosphate (DMAPP). Acts in the terminal step of the DOXP/MEP pathway for isoprenoid precursor biosynthesis.</text>
</comment>
<comment type="catalytic activity">
    <reaction evidence="1">
        <text>isopentenyl diphosphate + 2 oxidized [2Fe-2S]-[ferredoxin] + H2O = (2E)-4-hydroxy-3-methylbut-2-enyl diphosphate + 2 reduced [2Fe-2S]-[ferredoxin] + 2 H(+)</text>
        <dbReference type="Rhea" id="RHEA:24488"/>
        <dbReference type="Rhea" id="RHEA-COMP:10000"/>
        <dbReference type="Rhea" id="RHEA-COMP:10001"/>
        <dbReference type="ChEBI" id="CHEBI:15377"/>
        <dbReference type="ChEBI" id="CHEBI:15378"/>
        <dbReference type="ChEBI" id="CHEBI:33737"/>
        <dbReference type="ChEBI" id="CHEBI:33738"/>
        <dbReference type="ChEBI" id="CHEBI:128753"/>
        <dbReference type="ChEBI" id="CHEBI:128769"/>
        <dbReference type="EC" id="1.17.7.4"/>
    </reaction>
</comment>
<comment type="catalytic activity">
    <reaction evidence="1">
        <text>dimethylallyl diphosphate + 2 oxidized [2Fe-2S]-[ferredoxin] + H2O = (2E)-4-hydroxy-3-methylbut-2-enyl diphosphate + 2 reduced [2Fe-2S]-[ferredoxin] + 2 H(+)</text>
        <dbReference type="Rhea" id="RHEA:24825"/>
        <dbReference type="Rhea" id="RHEA-COMP:10000"/>
        <dbReference type="Rhea" id="RHEA-COMP:10001"/>
        <dbReference type="ChEBI" id="CHEBI:15377"/>
        <dbReference type="ChEBI" id="CHEBI:15378"/>
        <dbReference type="ChEBI" id="CHEBI:33737"/>
        <dbReference type="ChEBI" id="CHEBI:33738"/>
        <dbReference type="ChEBI" id="CHEBI:57623"/>
        <dbReference type="ChEBI" id="CHEBI:128753"/>
        <dbReference type="EC" id="1.17.7.4"/>
    </reaction>
</comment>
<comment type="cofactor">
    <cofactor evidence="1">
        <name>[4Fe-4S] cluster</name>
        <dbReference type="ChEBI" id="CHEBI:49883"/>
    </cofactor>
    <text evidence="1">Binds 1 [4Fe-4S] cluster per subunit.</text>
</comment>
<comment type="pathway">
    <text evidence="1">Isoprenoid biosynthesis; dimethylallyl diphosphate biosynthesis; dimethylallyl diphosphate from (2E)-4-hydroxy-3-methylbutenyl diphosphate: step 1/1.</text>
</comment>
<comment type="pathway">
    <text evidence="1">Isoprenoid biosynthesis; isopentenyl diphosphate biosynthesis via DXP pathway; isopentenyl diphosphate from 1-deoxy-D-xylulose 5-phosphate: step 6/6.</text>
</comment>
<comment type="similarity">
    <text evidence="1">Belongs to the IspH family.</text>
</comment>
<reference key="1">
    <citation type="journal article" date="2003" name="J. Bacteriol.">
        <title>Complete genome sequence of the oral pathogenic bacterium Porphyromonas gingivalis strain W83.</title>
        <authorList>
            <person name="Nelson K.E."/>
            <person name="Fleischmann R.D."/>
            <person name="DeBoy R.T."/>
            <person name="Paulsen I.T."/>
            <person name="Fouts D.E."/>
            <person name="Eisen J.A."/>
            <person name="Daugherty S.C."/>
            <person name="Dodson R.J."/>
            <person name="Durkin A.S."/>
            <person name="Gwinn M.L."/>
            <person name="Haft D.H."/>
            <person name="Kolonay J.F."/>
            <person name="Nelson W.C."/>
            <person name="Mason T.M."/>
            <person name="Tallon L."/>
            <person name="Gray J."/>
            <person name="Granger D."/>
            <person name="Tettelin H."/>
            <person name="Dong H."/>
            <person name="Galvin J.L."/>
            <person name="Duncan M.J."/>
            <person name="Dewhirst F.E."/>
            <person name="Fraser C.M."/>
        </authorList>
    </citation>
    <scope>NUCLEOTIDE SEQUENCE [LARGE SCALE GENOMIC DNA]</scope>
    <source>
        <strain>ATCC BAA-308 / W83</strain>
    </source>
</reference>
<proteinExistence type="inferred from homology"/>
<name>ISPH_PORGI</name>
<sequence>MIPIEIDSGSGFCFGVVNAIRHAEKQLEKSSDKLYCLGDIVHNTLEVERLGKKGLETIDYDAFSRLRGAKVLLRAHGEPPEIYRMAGENGVTIIDATCPVVLRLQNKIKSRYEATRSLGAQVVIYGKRGHAEVNGLVGQTEGTAIVIESEEELDKIDYTRPVILFSQTTKSLEGFGQIIDSISTRMQPGVTFEHHDTICRQVANRIPHIGAFATAHELVFFVAGEKSSNGKVLFGHCLAANPRSIFISSPEVIVPDMLVPLPASIGICGATSTPRWQMEEVASHIKALL</sequence>
<protein>
    <recommendedName>
        <fullName evidence="1">4-hydroxy-3-methylbut-2-enyl diphosphate reductase</fullName>
        <shortName evidence="1">HMBPP reductase</shortName>
        <ecNumber evidence="1">1.17.7.4</ecNumber>
    </recommendedName>
</protein>